<organism>
    <name type="scientific">Lactobacillus johnsonii (strain CNCM I-12250 / La1 / NCC 533)</name>
    <dbReference type="NCBI Taxonomy" id="257314"/>
    <lineage>
        <taxon>Bacteria</taxon>
        <taxon>Bacillati</taxon>
        <taxon>Bacillota</taxon>
        <taxon>Bacilli</taxon>
        <taxon>Lactobacillales</taxon>
        <taxon>Lactobacillaceae</taxon>
        <taxon>Lactobacillus</taxon>
    </lineage>
</organism>
<keyword id="KW-0687">Ribonucleoprotein</keyword>
<keyword id="KW-0689">Ribosomal protein</keyword>
<reference key="1">
    <citation type="journal article" date="2004" name="Proc. Natl. Acad. Sci. U.S.A.">
        <title>The genome sequence of the probiotic intestinal bacterium Lactobacillus johnsonii NCC 533.</title>
        <authorList>
            <person name="Pridmore R.D."/>
            <person name="Berger B."/>
            <person name="Desiere F."/>
            <person name="Vilanova D."/>
            <person name="Barretto C."/>
            <person name="Pittet A.-C."/>
            <person name="Zwahlen M.-C."/>
            <person name="Rouvet M."/>
            <person name="Altermann E."/>
            <person name="Barrangou R."/>
            <person name="Mollet B."/>
            <person name="Mercenier A."/>
            <person name="Klaenhammer T."/>
            <person name="Arigoni F."/>
            <person name="Schell M.A."/>
        </authorList>
    </citation>
    <scope>NUCLEOTIDE SEQUENCE [LARGE SCALE GENOMIC DNA]</scope>
    <source>
        <strain>CNCM I-1225 / La1 / NCC 533</strain>
    </source>
</reference>
<dbReference type="EMBL" id="AE017198">
    <property type="protein sequence ID" value="AAS08324.1"/>
    <property type="molecule type" value="Genomic_DNA"/>
</dbReference>
<dbReference type="RefSeq" id="WP_003647835.1">
    <property type="nucleotide sequence ID" value="NC_005362.1"/>
</dbReference>
<dbReference type="SMR" id="Q74L89"/>
<dbReference type="GeneID" id="83569753"/>
<dbReference type="KEGG" id="ljo:LJ_0338"/>
<dbReference type="eggNOG" id="COG0051">
    <property type="taxonomic scope" value="Bacteria"/>
</dbReference>
<dbReference type="HOGENOM" id="CLU_122625_1_3_9"/>
<dbReference type="Proteomes" id="UP000000581">
    <property type="component" value="Chromosome"/>
</dbReference>
<dbReference type="GO" id="GO:1990904">
    <property type="term" value="C:ribonucleoprotein complex"/>
    <property type="evidence" value="ECO:0007669"/>
    <property type="project" value="UniProtKB-KW"/>
</dbReference>
<dbReference type="GO" id="GO:0005840">
    <property type="term" value="C:ribosome"/>
    <property type="evidence" value="ECO:0007669"/>
    <property type="project" value="UniProtKB-KW"/>
</dbReference>
<dbReference type="GO" id="GO:0003735">
    <property type="term" value="F:structural constituent of ribosome"/>
    <property type="evidence" value="ECO:0007669"/>
    <property type="project" value="InterPro"/>
</dbReference>
<dbReference type="GO" id="GO:0000049">
    <property type="term" value="F:tRNA binding"/>
    <property type="evidence" value="ECO:0007669"/>
    <property type="project" value="UniProtKB-UniRule"/>
</dbReference>
<dbReference type="GO" id="GO:0006412">
    <property type="term" value="P:translation"/>
    <property type="evidence" value="ECO:0007669"/>
    <property type="project" value="UniProtKB-UniRule"/>
</dbReference>
<dbReference type="FunFam" id="3.30.70.600:FF:000001">
    <property type="entry name" value="30S ribosomal protein S10"/>
    <property type="match status" value="1"/>
</dbReference>
<dbReference type="Gene3D" id="3.30.70.600">
    <property type="entry name" value="Ribosomal protein S10 domain"/>
    <property type="match status" value="1"/>
</dbReference>
<dbReference type="HAMAP" id="MF_00508">
    <property type="entry name" value="Ribosomal_uS10"/>
    <property type="match status" value="1"/>
</dbReference>
<dbReference type="InterPro" id="IPR001848">
    <property type="entry name" value="Ribosomal_uS10"/>
</dbReference>
<dbReference type="InterPro" id="IPR018268">
    <property type="entry name" value="Ribosomal_uS10_CS"/>
</dbReference>
<dbReference type="InterPro" id="IPR027486">
    <property type="entry name" value="Ribosomal_uS10_dom"/>
</dbReference>
<dbReference type="InterPro" id="IPR036838">
    <property type="entry name" value="Ribosomal_uS10_dom_sf"/>
</dbReference>
<dbReference type="NCBIfam" id="NF001861">
    <property type="entry name" value="PRK00596.1"/>
    <property type="match status" value="1"/>
</dbReference>
<dbReference type="NCBIfam" id="TIGR01049">
    <property type="entry name" value="rpsJ_bact"/>
    <property type="match status" value="1"/>
</dbReference>
<dbReference type="PANTHER" id="PTHR11700">
    <property type="entry name" value="30S RIBOSOMAL PROTEIN S10 FAMILY MEMBER"/>
    <property type="match status" value="1"/>
</dbReference>
<dbReference type="Pfam" id="PF00338">
    <property type="entry name" value="Ribosomal_S10"/>
    <property type="match status" value="1"/>
</dbReference>
<dbReference type="PRINTS" id="PR00971">
    <property type="entry name" value="RIBOSOMALS10"/>
</dbReference>
<dbReference type="SMART" id="SM01403">
    <property type="entry name" value="Ribosomal_S10"/>
    <property type="match status" value="1"/>
</dbReference>
<dbReference type="SUPFAM" id="SSF54999">
    <property type="entry name" value="Ribosomal protein S10"/>
    <property type="match status" value="1"/>
</dbReference>
<dbReference type="PROSITE" id="PS00361">
    <property type="entry name" value="RIBOSOMAL_S10"/>
    <property type="match status" value="1"/>
</dbReference>
<gene>
    <name evidence="1" type="primary">rpsJ</name>
    <name type="ordered locus">LJ_0338</name>
</gene>
<comment type="function">
    <text evidence="1">Involved in the binding of tRNA to the ribosomes.</text>
</comment>
<comment type="subunit">
    <text evidence="1">Part of the 30S ribosomal subunit.</text>
</comment>
<comment type="similarity">
    <text evidence="1">Belongs to the universal ribosomal protein uS10 family.</text>
</comment>
<protein>
    <recommendedName>
        <fullName evidence="1">Small ribosomal subunit protein uS10</fullName>
    </recommendedName>
    <alternativeName>
        <fullName evidence="2">30S ribosomal protein S10</fullName>
    </alternativeName>
</protein>
<feature type="chain" id="PRO_0000146541" description="Small ribosomal subunit protein uS10">
    <location>
        <begin position="1"/>
        <end position="102"/>
    </location>
</feature>
<name>RS10_LACJO</name>
<sequence length="102" mass="11471">MASQQIRIRLKSYEHGILDESAAKIVATAERTGAQISGPVPLPTERTLFTVLRSPHKNKDSREQFEIRTHKRLIDILNPTPKTVDSLMKLDLPSGVDIEIKL</sequence>
<evidence type="ECO:0000255" key="1">
    <source>
        <dbReference type="HAMAP-Rule" id="MF_00508"/>
    </source>
</evidence>
<evidence type="ECO:0000305" key="2"/>
<accession>Q74L89</accession>
<proteinExistence type="inferred from homology"/>